<sequence>MSRAVHLPVPCPVQLGSLRNDSLEAQLHEYVKQGNYVKVKRILKKGIYVDAVNSLGQTALFIAALLGLTKLVDVLVDYGADPNHRCFDGSTPVHAAAFSGNQWILSKLLDAGGDLRLHDEKGRNPQTWALAAGKERSTVMVEFMQRCAAHMQAIIQGFSDLLKKIDSPQRLISGVPRFGGLMQGNPNGSPNRPPKAGVISAQNIYSFGFGKFYLTGGTQLAYLGSLPVIGEKEVIQADDEPTFSFFSGPYMVMTNLVWNGSRVTVKELHLSTHPHCSRLRMADLLIAEQEHSSKLRHPHVLQLMAVCLSPDLEKTRLVYERVTVGTLFSVLHERRAQFPVLHMEVIVHLLLQISDALRYLHSRGFIHRSLSSYAIHIVSTGEARLTNLEYMMESQDGGAHRGLTRVPLPTQLYNWAAPEVIIQKAATVKSDIYSFSVIVQEILTDNIPWDGLDGSVIKETIVLGNYLEADVRLPKPYYDIVKSGLQVKQKDRTMNLQDIRYIMKNDLKDFIGAQRTQPTESPRVQRYEFHPDVNVCLGLTSEHPKETPNLEIKELKETGSQFHSPRGHSSPTGKATPEPPVPDVSPVAQQTHRQDAASPACSVAEEARNPSPDQTSLCSFEINEIYSGCLDTADDPEEECPGTGSSLEGAIPNQTDELKSMEEELEKMEREVCCSCDEDESSSDADTELSCEDWEWQNDALCSPSRPEPARGAKGATNNRSMTEEYISKCVLNLKISQTLIHQNADLLRNVQQKIEKLEMIQKEQAERRSLWASSREFAGIHDSPSALGPPASSYLPPVVQRPGDQQLDPGGSGLTLARSPRTLPTLCGPGKQSRGEQFQPTHGAKASLERDRNQNTSSQGRPRESSPQSKTTQLSSALLTVPSHPQGSPTSSKPGQDSTRISMQSVSSEIYNAKSRNNKDDGEIHLKWKTEVKEMAAKAATGQLTVPPWHPRSGVALDSEAENEPDPLPQLPIRVSEHMDWQQAADYLKKSDEPGGNDKCGQTDSSDQRGRQSGPQRFTSIRHLPPREDEQPEHSEVFQANSDASVAVEKSYSGQSAQSTCSPESSEDTEDMTDEFLTPDHEYFYSSIAQENLALETSSPIDEDFEGIQHACARPQASGEEKFQMRKNLGKNSEILTKSQFQPIRSPEGEQDETLKEPPKEVKEKDISLTDIQDLSSISCEHDGSFKEVSCKTPKINHAPTSVSTPLSPGSLSSVASQYKDCLESIPFQDTKTGSTSCGTSQESTQTLSDKFTSVREKAKSLDSLLTSSEVLPARLTNLKRLPAFTGAGSSSIAKAPDTSRCATQRRSLPKELVEAISQHHIDELPPPSQELLDEIEHLKGQQVSSTALDENTASRPGSTENDQRHLEEQETHSNKEDSSMLWTKETQDLEEDTERAHSTLDEDLERWLQPPEDSTQLPDLPKGPAREASSKDQEVGEKKRKGEESTKPEKRKPESFLGTSEEEELKPCFWKRLGWSEPSRIIVLDQSDLSD</sequence>
<keyword id="KW-0040">ANK repeat</keyword>
<keyword id="KW-0067">ATP-binding</keyword>
<keyword id="KW-0131">Cell cycle</keyword>
<keyword id="KW-0132">Cell division</keyword>
<keyword id="KW-0137">Centromere</keyword>
<keyword id="KW-0158">Chromosome</keyword>
<keyword id="KW-0963">Cytoplasm</keyword>
<keyword id="KW-0995">Kinetochore</keyword>
<keyword id="KW-0498">Mitosis</keyword>
<keyword id="KW-0547">Nucleotide-binding</keyword>
<keyword id="KW-0597">Phosphoprotein</keyword>
<keyword id="KW-1185">Reference proteome</keyword>
<keyword id="KW-0677">Repeat</keyword>
<protein>
    <recommendedName>
        <fullName>Inactive serine/threonine-protein kinase TEX14</fullName>
    </recommendedName>
    <alternativeName>
        <fullName>Testis-expressed sequence 14</fullName>
    </alternativeName>
    <alternativeName>
        <fullName>Testis-expressed sequence 14 protein</fullName>
    </alternativeName>
</protein>
<organism>
    <name type="scientific">Bos taurus</name>
    <name type="common">Bovine</name>
    <dbReference type="NCBI Taxonomy" id="9913"/>
    <lineage>
        <taxon>Eukaryota</taxon>
        <taxon>Metazoa</taxon>
        <taxon>Chordata</taxon>
        <taxon>Craniata</taxon>
        <taxon>Vertebrata</taxon>
        <taxon>Euteleostomi</taxon>
        <taxon>Mammalia</taxon>
        <taxon>Eutheria</taxon>
        <taxon>Laurasiatheria</taxon>
        <taxon>Artiodactyla</taxon>
        <taxon>Ruminantia</taxon>
        <taxon>Pecora</taxon>
        <taxon>Bovidae</taxon>
        <taxon>Bovinae</taxon>
        <taxon>Bos</taxon>
    </lineage>
</organism>
<reference key="1">
    <citation type="journal article" date="2009" name="Genome Biol.">
        <title>A whole-genome assembly of the domestic cow, Bos taurus.</title>
        <authorList>
            <person name="Zimin A.V."/>
            <person name="Delcher A.L."/>
            <person name="Florea L."/>
            <person name="Kelley D.R."/>
            <person name="Schatz M.C."/>
            <person name="Puiu D."/>
            <person name="Hanrahan F."/>
            <person name="Pertea G."/>
            <person name="Van Tassell C.P."/>
            <person name="Sonstegard T.S."/>
            <person name="Marcais G."/>
            <person name="Roberts M."/>
            <person name="Subramanian P."/>
            <person name="Yorke J.A."/>
            <person name="Salzberg S.L."/>
        </authorList>
    </citation>
    <scope>NUCLEOTIDE SEQUENCE [LARGE SCALE GENOMIC DNA]</scope>
    <source>
        <strain>Hereford</strain>
    </source>
</reference>
<evidence type="ECO:0000250" key="1"/>
<evidence type="ECO:0000250" key="2">
    <source>
        <dbReference type="UniProtKB" id="F1M5M3"/>
    </source>
</evidence>
<evidence type="ECO:0000250" key="3">
    <source>
        <dbReference type="UniProtKB" id="Q7M6U3"/>
    </source>
</evidence>
<evidence type="ECO:0000255" key="4">
    <source>
        <dbReference type="PROSITE-ProRule" id="PRU00159"/>
    </source>
</evidence>
<evidence type="ECO:0000256" key="5">
    <source>
        <dbReference type="SAM" id="MobiDB-lite"/>
    </source>
</evidence>
<evidence type="ECO:0000305" key="6"/>
<proteinExistence type="inferred from homology"/>
<accession>F1MJR8</accession>
<dbReference type="EMBL" id="DAAA02048320">
    <property type="status" value="NOT_ANNOTATED_CDS"/>
    <property type="molecule type" value="Genomic_DNA"/>
</dbReference>
<dbReference type="EMBL" id="DAAA02048321">
    <property type="status" value="NOT_ANNOTATED_CDS"/>
    <property type="molecule type" value="Genomic_DNA"/>
</dbReference>
<dbReference type="EMBL" id="DAAA02048322">
    <property type="status" value="NOT_ANNOTATED_CDS"/>
    <property type="molecule type" value="Genomic_DNA"/>
</dbReference>
<dbReference type="EMBL" id="DAAA02048323">
    <property type="status" value="NOT_ANNOTATED_CDS"/>
    <property type="molecule type" value="Genomic_DNA"/>
</dbReference>
<dbReference type="RefSeq" id="NP_001179497.1">
    <property type="nucleotide sequence ID" value="NM_001192568.1"/>
</dbReference>
<dbReference type="SMR" id="F1MJR8"/>
<dbReference type="FunCoup" id="F1MJR8">
    <property type="interactions" value="34"/>
</dbReference>
<dbReference type="STRING" id="9913.ENSBTAP00000013424"/>
<dbReference type="PaxDb" id="9913-ENSBTAP00000013424"/>
<dbReference type="GeneID" id="522810"/>
<dbReference type="KEGG" id="bta:522810"/>
<dbReference type="CTD" id="56155"/>
<dbReference type="VEuPathDB" id="HostDB:ENSBTAG00000010167"/>
<dbReference type="eggNOG" id="ENOG502QSZN">
    <property type="taxonomic scope" value="Eukaryota"/>
</dbReference>
<dbReference type="HOGENOM" id="CLU_004733_0_0_1"/>
<dbReference type="InParanoid" id="F1MJR8"/>
<dbReference type="OMA" id="FGKAMPW"/>
<dbReference type="OrthoDB" id="5962695at2759"/>
<dbReference type="TreeFam" id="TF328704"/>
<dbReference type="Proteomes" id="UP000009136">
    <property type="component" value="Chromosome 19"/>
</dbReference>
<dbReference type="Bgee" id="ENSBTAG00000010167">
    <property type="expression patterns" value="Expressed in spermatocyte and 83 other cell types or tissues"/>
</dbReference>
<dbReference type="GO" id="GO:0005737">
    <property type="term" value="C:cytoplasm"/>
    <property type="evidence" value="ECO:0007669"/>
    <property type="project" value="UniProtKB-SubCell"/>
</dbReference>
<dbReference type="GO" id="GO:0045171">
    <property type="term" value="C:intercellular bridge"/>
    <property type="evidence" value="ECO:0000250"/>
    <property type="project" value="UniProtKB"/>
</dbReference>
<dbReference type="GO" id="GO:0000776">
    <property type="term" value="C:kinetochore"/>
    <property type="evidence" value="ECO:0000250"/>
    <property type="project" value="UniProtKB"/>
</dbReference>
<dbReference type="GO" id="GO:0030496">
    <property type="term" value="C:midbody"/>
    <property type="evidence" value="ECO:0000250"/>
    <property type="project" value="UniProtKB"/>
</dbReference>
<dbReference type="GO" id="GO:0005524">
    <property type="term" value="F:ATP binding"/>
    <property type="evidence" value="ECO:0007669"/>
    <property type="project" value="UniProtKB-KW"/>
</dbReference>
<dbReference type="GO" id="GO:0004672">
    <property type="term" value="F:protein kinase activity"/>
    <property type="evidence" value="ECO:0007669"/>
    <property type="project" value="InterPro"/>
</dbReference>
<dbReference type="GO" id="GO:0008608">
    <property type="term" value="P:attachment of spindle microtubules to kinetochore"/>
    <property type="evidence" value="ECO:0000250"/>
    <property type="project" value="UniProtKB"/>
</dbReference>
<dbReference type="GO" id="GO:0051301">
    <property type="term" value="P:cell division"/>
    <property type="evidence" value="ECO:0007669"/>
    <property type="project" value="UniProtKB-KW"/>
</dbReference>
<dbReference type="GO" id="GO:0043063">
    <property type="term" value="P:intercellular bridge organization"/>
    <property type="evidence" value="ECO:0000250"/>
    <property type="project" value="UniProtKB"/>
</dbReference>
<dbReference type="GO" id="GO:0007140">
    <property type="term" value="P:male meiotic nuclear division"/>
    <property type="evidence" value="ECO:0000250"/>
    <property type="project" value="UniProtKB"/>
</dbReference>
<dbReference type="GO" id="GO:0051306">
    <property type="term" value="P:mitotic sister chromatid separation"/>
    <property type="evidence" value="ECO:0000250"/>
    <property type="project" value="UniProtKB"/>
</dbReference>
<dbReference type="GO" id="GO:0007094">
    <property type="term" value="P:mitotic spindle assembly checkpoint signaling"/>
    <property type="evidence" value="ECO:0000250"/>
    <property type="project" value="UniProtKB"/>
</dbReference>
<dbReference type="FunFam" id="1.10.510.10:FF:000428">
    <property type="entry name" value="inactive serine/threonine-protein kinase TEX14 isoform X1"/>
    <property type="match status" value="1"/>
</dbReference>
<dbReference type="FunFam" id="1.25.40.20:FF:000153">
    <property type="entry name" value="inactive serine/threonine-protein kinase TEX14 isoform X3"/>
    <property type="match status" value="1"/>
</dbReference>
<dbReference type="Gene3D" id="1.25.40.20">
    <property type="entry name" value="Ankyrin repeat-containing domain"/>
    <property type="match status" value="1"/>
</dbReference>
<dbReference type="Gene3D" id="1.10.510.10">
    <property type="entry name" value="Transferase(Phosphotransferase) domain 1"/>
    <property type="match status" value="1"/>
</dbReference>
<dbReference type="InterPro" id="IPR002110">
    <property type="entry name" value="Ankyrin_rpt"/>
</dbReference>
<dbReference type="InterPro" id="IPR036770">
    <property type="entry name" value="Ankyrin_rpt-contain_sf"/>
</dbReference>
<dbReference type="InterPro" id="IPR011009">
    <property type="entry name" value="Kinase-like_dom_sf"/>
</dbReference>
<dbReference type="InterPro" id="IPR000719">
    <property type="entry name" value="Prot_kinase_dom"/>
</dbReference>
<dbReference type="InterPro" id="IPR001245">
    <property type="entry name" value="Ser-Thr/Tyr_kinase_cat_dom"/>
</dbReference>
<dbReference type="InterPro" id="IPR039339">
    <property type="entry name" value="Tex14"/>
</dbReference>
<dbReference type="PANTHER" id="PTHR23060:SF1">
    <property type="entry name" value="INACTIVE SERINE_THREONINE-PROTEIN KINASE TEX14"/>
    <property type="match status" value="1"/>
</dbReference>
<dbReference type="PANTHER" id="PTHR23060">
    <property type="entry name" value="TESTIS EXPRESSED GENE 14"/>
    <property type="match status" value="1"/>
</dbReference>
<dbReference type="Pfam" id="PF12796">
    <property type="entry name" value="Ank_2"/>
    <property type="match status" value="1"/>
</dbReference>
<dbReference type="Pfam" id="PF07714">
    <property type="entry name" value="PK_Tyr_Ser-Thr"/>
    <property type="match status" value="1"/>
</dbReference>
<dbReference type="SMART" id="SM00248">
    <property type="entry name" value="ANK"/>
    <property type="match status" value="3"/>
</dbReference>
<dbReference type="SUPFAM" id="SSF48403">
    <property type="entry name" value="Ankyrin repeat"/>
    <property type="match status" value="1"/>
</dbReference>
<dbReference type="SUPFAM" id="SSF56112">
    <property type="entry name" value="Protein kinase-like (PK-like)"/>
    <property type="match status" value="1"/>
</dbReference>
<dbReference type="PROSITE" id="PS50297">
    <property type="entry name" value="ANK_REP_REGION"/>
    <property type="match status" value="1"/>
</dbReference>
<dbReference type="PROSITE" id="PS50088">
    <property type="entry name" value="ANK_REPEAT"/>
    <property type="match status" value="2"/>
</dbReference>
<dbReference type="PROSITE" id="PS50011">
    <property type="entry name" value="PROTEIN_KINASE_DOM"/>
    <property type="match status" value="1"/>
</dbReference>
<gene>
    <name type="primary">TEX14</name>
</gene>
<feature type="chain" id="PRO_0000417521" description="Inactive serine/threonine-protein kinase TEX14">
    <location>
        <begin position="1"/>
        <end position="1493"/>
    </location>
</feature>
<feature type="repeat" description="ANK 1">
    <location>
        <begin position="27"/>
        <end position="54"/>
    </location>
</feature>
<feature type="repeat" description="ANK 2">
    <location>
        <begin position="55"/>
        <end position="84"/>
    </location>
</feature>
<feature type="repeat" description="ANK 3">
    <location>
        <begin position="88"/>
        <end position="117"/>
    </location>
</feature>
<feature type="domain" description="Protein kinase" evidence="4">
    <location>
        <begin position="198"/>
        <end position="511"/>
    </location>
</feature>
<feature type="region of interest" description="Disordered" evidence="5">
    <location>
        <begin position="559"/>
        <end position="615"/>
    </location>
</feature>
<feature type="region of interest" description="Disordered" evidence="5">
    <location>
        <begin position="782"/>
        <end position="904"/>
    </location>
</feature>
<feature type="region of interest" description="Disordered" evidence="5">
    <location>
        <begin position="940"/>
        <end position="1081"/>
    </location>
</feature>
<feature type="region of interest" description="Disordered" evidence="5">
    <location>
        <begin position="1115"/>
        <end position="1167"/>
    </location>
</feature>
<feature type="region of interest" description="Disordered" evidence="5">
    <location>
        <begin position="1288"/>
        <end position="1307"/>
    </location>
</feature>
<feature type="region of interest" description="Disordered" evidence="5">
    <location>
        <begin position="1341"/>
        <end position="1466"/>
    </location>
</feature>
<feature type="short sequence motif" description="GPPX3Y">
    <location>
        <begin position="789"/>
        <end position="795"/>
    </location>
</feature>
<feature type="short sequence motif" description="D-box">
    <location>
        <begin position="846"/>
        <end position="854"/>
    </location>
</feature>
<feature type="compositionally biased region" description="Polar residues" evidence="5">
    <location>
        <begin position="559"/>
        <end position="573"/>
    </location>
</feature>
<feature type="compositionally biased region" description="Polar residues" evidence="5">
    <location>
        <begin position="855"/>
        <end position="904"/>
    </location>
</feature>
<feature type="compositionally biased region" description="Polar residues" evidence="5">
    <location>
        <begin position="1001"/>
        <end position="1020"/>
    </location>
</feature>
<feature type="compositionally biased region" description="Basic and acidic residues" evidence="5">
    <location>
        <begin position="1026"/>
        <end position="1037"/>
    </location>
</feature>
<feature type="compositionally biased region" description="Polar residues" evidence="5">
    <location>
        <begin position="1053"/>
        <end position="1064"/>
    </location>
</feature>
<feature type="compositionally biased region" description="Acidic residues" evidence="5">
    <location>
        <begin position="1066"/>
        <end position="1075"/>
    </location>
</feature>
<feature type="compositionally biased region" description="Polar residues" evidence="5">
    <location>
        <begin position="1131"/>
        <end position="1144"/>
    </location>
</feature>
<feature type="compositionally biased region" description="Basic and acidic residues" evidence="5">
    <location>
        <begin position="1154"/>
        <end position="1167"/>
    </location>
</feature>
<feature type="compositionally biased region" description="Polar residues" evidence="5">
    <location>
        <begin position="1343"/>
        <end position="1362"/>
    </location>
</feature>
<feature type="compositionally biased region" description="Basic and acidic residues" evidence="5">
    <location>
        <begin position="1363"/>
        <end position="1380"/>
    </location>
</feature>
<feature type="compositionally biased region" description="Basic and acidic residues" evidence="5">
    <location>
        <begin position="1426"/>
        <end position="1456"/>
    </location>
</feature>
<feature type="binding site" evidence="4">
    <location>
        <begin position="204"/>
        <end position="212"/>
    </location>
    <ligand>
        <name>ATP</name>
        <dbReference type="ChEBI" id="CHEBI:30616"/>
    </ligand>
</feature>
<feature type="binding site" evidence="4">
    <location>
        <position position="266"/>
    </location>
    <ligand>
        <name>ATP</name>
        <dbReference type="ChEBI" id="CHEBI:30616"/>
    </ligand>
</feature>
<feature type="modified residue" description="Phosphoserine; by PLK1" evidence="3">
    <location>
        <position position="430"/>
    </location>
</feature>
<feature type="modified residue" description="Phosphoserine" evidence="2">
    <location>
        <position position="560"/>
    </location>
</feature>
<feature type="modified residue" description="Phosphoserine" evidence="2">
    <location>
        <position position="660"/>
    </location>
</feature>
<feature type="modified residue" description="Phosphoserine" evidence="3">
    <location>
        <position position="1100"/>
    </location>
</feature>
<feature type="modified residue" description="Phosphoserine" evidence="3">
    <location>
        <position position="1262"/>
    </location>
</feature>
<feature type="modified residue" description="Phosphoserine" evidence="3">
    <location>
        <position position="1400"/>
    </location>
</feature>
<feature type="modified residue" description="Phosphoserine" evidence="3">
    <location>
        <position position="1492"/>
    </location>
</feature>
<name>TEX14_BOVIN</name>
<comment type="function">
    <text evidence="1">Required both for the formation of intercellular bridges during meiosis and for kinetochore-microtubule attachment during mitosis. Intercellular bridges are evolutionarily conserved structures that connect differentiating germ cells and are required for spermatogenesis and male fertility. Acts by promoting the conversion of midbodies into intercellular bridges via its interaction with CEP55: interaction with CEP55 inhibits the interaction between CEP55 and PDCD6IP/ALIX and TSG101, blocking cell abscission and leading to transform midbodies into intercellular bridges. Also plays a role during mitosis: recruited to kinetochores by PLK1 during early mitosis and regulates the maturation of the outer kinetochores and microtubule attachment. Has no protein kinase activity in vitro (By similarity).</text>
</comment>
<comment type="subunit">
    <text evidence="1">Interacts with KIF23 and RBM44. Interacts with CEP55; inhibiting interaction between CEP55 and PDCD6IP/ALIX and TSG101 (By similarity).</text>
</comment>
<comment type="subcellular location">
    <subcellularLocation>
        <location evidence="1">Cytoplasm</location>
    </subcellularLocation>
    <subcellularLocation>
        <location evidence="1">Midbody</location>
    </subcellularLocation>
    <subcellularLocation>
        <location evidence="1">Chromosome</location>
        <location evidence="1">Centromere</location>
        <location evidence="1">Kinetochore</location>
    </subcellularLocation>
    <text evidence="1">Detected in the intercellular bridges that connect male germ cell daughter cells after cell division.</text>
</comment>
<comment type="domain">
    <text>The protein kinase domain is predicted to be catalytically inactive.</text>
</comment>
<comment type="domain">
    <text evidence="1">The GPPX3Y motif mediates interaction with CEP55.</text>
</comment>
<comment type="PTM">
    <text>Phosphorylated on Thr residues by CDK1 during early phases of mitosis, promoting the interaction with PLK1 and recruitment to kinetochores. Phosphorylated on Ser-430 by PLK1 during late prometaphase promotes the rapid depletion from kinetochores and its subsequent degradation by the APC/C complex.</text>
</comment>
<comment type="similarity">
    <text evidence="6">Belongs to the protein kinase superfamily.</text>
</comment>
<comment type="caution">
    <text evidence="6">In contrast to protein kinases, Ser-369 is present instead of the conserved Asp which is expected to be an active site residue.</text>
</comment>